<gene>
    <name type="primary">cnp1</name>
    <name type="synonym">sim2</name>
    <name type="ORF">SPBC1105.17</name>
</gene>
<feature type="chain" id="PRO_0000221375" description="Histone H3-like centromeric protein cnp1">
    <location>
        <begin position="1"/>
        <end position="120"/>
    </location>
</feature>
<feature type="region of interest" description="Disordered" evidence="2">
    <location>
        <begin position="1"/>
        <end position="26"/>
    </location>
</feature>
<feature type="region of interest" description="H3-like">
    <location>
        <begin position="14"/>
        <end position="120"/>
    </location>
</feature>
<reference key="1">
    <citation type="journal article" date="2000" name="Science">
        <title>Requirement of Mis6 centromere connector for localizing a CENP-A-like protein in fission yeast.</title>
        <authorList>
            <person name="Takahashi K."/>
            <person name="Chen E.S."/>
            <person name="Yanagida M."/>
        </authorList>
    </citation>
    <scope>NUCLEOTIDE SEQUENCE [GENOMIC DNA]</scope>
    <scope>FUNCTION</scope>
    <scope>INTERACTION WITH THE INNER KINETOCHORE; MIS6 AND SIM4</scope>
    <scope>SUBCELLULAR LOCATION</scope>
</reference>
<reference key="2">
    <citation type="journal article" date="2002" name="Nature">
        <title>The genome sequence of Schizosaccharomyces pombe.</title>
        <authorList>
            <person name="Wood V."/>
            <person name="Gwilliam R."/>
            <person name="Rajandream M.A."/>
            <person name="Lyne M.H."/>
            <person name="Lyne R."/>
            <person name="Stewart A."/>
            <person name="Sgouros J.G."/>
            <person name="Peat N."/>
            <person name="Hayles J."/>
            <person name="Baker S.G."/>
            <person name="Basham D."/>
            <person name="Bowman S."/>
            <person name="Brooks K."/>
            <person name="Brown D."/>
            <person name="Brown S."/>
            <person name="Chillingworth T."/>
            <person name="Churcher C.M."/>
            <person name="Collins M."/>
            <person name="Connor R."/>
            <person name="Cronin A."/>
            <person name="Davis P."/>
            <person name="Feltwell T."/>
            <person name="Fraser A."/>
            <person name="Gentles S."/>
            <person name="Goble A."/>
            <person name="Hamlin N."/>
            <person name="Harris D.E."/>
            <person name="Hidalgo J."/>
            <person name="Hodgson G."/>
            <person name="Holroyd S."/>
            <person name="Hornsby T."/>
            <person name="Howarth S."/>
            <person name="Huckle E.J."/>
            <person name="Hunt S."/>
            <person name="Jagels K."/>
            <person name="James K.D."/>
            <person name="Jones L."/>
            <person name="Jones M."/>
            <person name="Leather S."/>
            <person name="McDonald S."/>
            <person name="McLean J."/>
            <person name="Mooney P."/>
            <person name="Moule S."/>
            <person name="Mungall K.L."/>
            <person name="Murphy L.D."/>
            <person name="Niblett D."/>
            <person name="Odell C."/>
            <person name="Oliver K."/>
            <person name="O'Neil S."/>
            <person name="Pearson D."/>
            <person name="Quail M.A."/>
            <person name="Rabbinowitsch E."/>
            <person name="Rutherford K.M."/>
            <person name="Rutter S."/>
            <person name="Saunders D."/>
            <person name="Seeger K."/>
            <person name="Sharp S."/>
            <person name="Skelton J."/>
            <person name="Simmonds M.N."/>
            <person name="Squares R."/>
            <person name="Squares S."/>
            <person name="Stevens K."/>
            <person name="Taylor K."/>
            <person name="Taylor R.G."/>
            <person name="Tivey A."/>
            <person name="Walsh S.V."/>
            <person name="Warren T."/>
            <person name="Whitehead S."/>
            <person name="Woodward J.R."/>
            <person name="Volckaert G."/>
            <person name="Aert R."/>
            <person name="Robben J."/>
            <person name="Grymonprez B."/>
            <person name="Weltjens I."/>
            <person name="Vanstreels E."/>
            <person name="Rieger M."/>
            <person name="Schaefer M."/>
            <person name="Mueller-Auer S."/>
            <person name="Gabel C."/>
            <person name="Fuchs M."/>
            <person name="Duesterhoeft A."/>
            <person name="Fritzc C."/>
            <person name="Holzer E."/>
            <person name="Moestl D."/>
            <person name="Hilbert H."/>
            <person name="Borzym K."/>
            <person name="Langer I."/>
            <person name="Beck A."/>
            <person name="Lehrach H."/>
            <person name="Reinhardt R."/>
            <person name="Pohl T.M."/>
            <person name="Eger P."/>
            <person name="Zimmermann W."/>
            <person name="Wedler H."/>
            <person name="Wambutt R."/>
            <person name="Purnelle B."/>
            <person name="Goffeau A."/>
            <person name="Cadieu E."/>
            <person name="Dreano S."/>
            <person name="Gloux S."/>
            <person name="Lelaure V."/>
            <person name="Mottier S."/>
            <person name="Galibert F."/>
            <person name="Aves S.J."/>
            <person name="Xiang Z."/>
            <person name="Hunt C."/>
            <person name="Moore K."/>
            <person name="Hurst S.M."/>
            <person name="Lucas M."/>
            <person name="Rochet M."/>
            <person name="Gaillardin C."/>
            <person name="Tallada V.A."/>
            <person name="Garzon A."/>
            <person name="Thode G."/>
            <person name="Daga R.R."/>
            <person name="Cruzado L."/>
            <person name="Jimenez J."/>
            <person name="Sanchez M."/>
            <person name="del Rey F."/>
            <person name="Benito J."/>
            <person name="Dominguez A."/>
            <person name="Revuelta J.L."/>
            <person name="Moreno S."/>
            <person name="Armstrong J."/>
            <person name="Forsburg S.L."/>
            <person name="Cerutti L."/>
            <person name="Lowe T."/>
            <person name="McCombie W.R."/>
            <person name="Paulsen I."/>
            <person name="Potashkin J."/>
            <person name="Shpakovski G.V."/>
            <person name="Ussery D."/>
            <person name="Barrell B.G."/>
            <person name="Nurse P."/>
        </authorList>
    </citation>
    <scope>NUCLEOTIDE SEQUENCE [LARGE SCALE GENOMIC DNA]</scope>
    <source>
        <strain>972 / ATCC 24843</strain>
    </source>
</reference>
<dbReference type="EMBL" id="AB041724">
    <property type="protein sequence ID" value="BAA94760.1"/>
    <property type="molecule type" value="Genomic_DNA"/>
</dbReference>
<dbReference type="EMBL" id="CU329671">
    <property type="protein sequence ID" value="CAB50980.1"/>
    <property type="molecule type" value="Genomic_DNA"/>
</dbReference>
<dbReference type="PIR" id="T39294">
    <property type="entry name" value="T39294"/>
</dbReference>
<dbReference type="RefSeq" id="NP_596473.1">
    <property type="nucleotide sequence ID" value="NM_001022392.2"/>
</dbReference>
<dbReference type="SMR" id="Q9Y812"/>
<dbReference type="BioGRID" id="276213">
    <property type="interactions" value="44"/>
</dbReference>
<dbReference type="FunCoup" id="Q9Y812">
    <property type="interactions" value="334"/>
</dbReference>
<dbReference type="IntAct" id="Q9Y812">
    <property type="interactions" value="6"/>
</dbReference>
<dbReference type="STRING" id="284812.Q9Y812"/>
<dbReference type="PaxDb" id="4896-SPBC1105.17.1"/>
<dbReference type="EnsemblFungi" id="SPBC1105.17.1">
    <property type="protein sequence ID" value="SPBC1105.17.1:pep"/>
    <property type="gene ID" value="SPBC1105.17"/>
</dbReference>
<dbReference type="GeneID" id="2539658"/>
<dbReference type="KEGG" id="spo:2539658"/>
<dbReference type="PomBase" id="SPBC1105.17">
    <property type="gene designation" value="cnp1"/>
</dbReference>
<dbReference type="VEuPathDB" id="FungiDB:SPBC1105.17"/>
<dbReference type="eggNOG" id="KOG1745">
    <property type="taxonomic scope" value="Eukaryota"/>
</dbReference>
<dbReference type="HOGENOM" id="CLU_078295_7_1_1"/>
<dbReference type="InParanoid" id="Q9Y812"/>
<dbReference type="OMA" id="VHLFEDC"/>
<dbReference type="PhylomeDB" id="Q9Y812"/>
<dbReference type="Reactome" id="R-SPO-2299718">
    <property type="pathway name" value="Condensation of Prophase Chromosomes"/>
</dbReference>
<dbReference type="Reactome" id="R-SPO-2559580">
    <property type="pathway name" value="Oxidative Stress Induced Senescence"/>
</dbReference>
<dbReference type="Reactome" id="R-SPO-3214815">
    <property type="pathway name" value="HDACs deacetylate histones"/>
</dbReference>
<dbReference type="Reactome" id="R-SPO-3214841">
    <property type="pathway name" value="PKMTs methylate histone lysines"/>
</dbReference>
<dbReference type="Reactome" id="R-SPO-3214842">
    <property type="pathway name" value="HDMs demethylate histones"/>
</dbReference>
<dbReference type="Reactome" id="R-SPO-3214847">
    <property type="pathway name" value="HATs acetylate histones"/>
</dbReference>
<dbReference type="Reactome" id="R-SPO-3214858">
    <property type="pathway name" value="RMTs methylate histone arginines"/>
</dbReference>
<dbReference type="Reactome" id="R-SPO-427359">
    <property type="pathway name" value="SIRT1 negatively regulates rRNA expression"/>
</dbReference>
<dbReference type="Reactome" id="R-SPO-5578749">
    <property type="pathway name" value="Transcriptional regulation by small RNAs"/>
</dbReference>
<dbReference type="Reactome" id="R-SPO-5625886">
    <property type="pathway name" value="Activated PKN1 stimulates transcription of AR (androgen receptor) regulated genes KLK2 and KLK3"/>
</dbReference>
<dbReference type="Reactome" id="R-SPO-5693565">
    <property type="pathway name" value="Recruitment and ATM-mediated phosphorylation of repair and signaling proteins at DNA double strand breaks"/>
</dbReference>
<dbReference type="Reactome" id="R-SPO-68616">
    <property type="pathway name" value="Assembly of the ORC complex at the origin of replication"/>
</dbReference>
<dbReference type="Reactome" id="R-SPO-73772">
    <property type="pathway name" value="RNA Polymerase I Promoter Escape"/>
</dbReference>
<dbReference type="Reactome" id="R-SPO-9018519">
    <property type="pathway name" value="Estrogen-dependent gene expression"/>
</dbReference>
<dbReference type="Reactome" id="R-SPO-983231">
    <property type="pathway name" value="Factors involved in megakaryocyte development and platelet production"/>
</dbReference>
<dbReference type="PRO" id="PR:Q9Y812"/>
<dbReference type="Proteomes" id="UP000002485">
    <property type="component" value="Chromosome II"/>
</dbReference>
<dbReference type="GO" id="GO:0061638">
    <property type="term" value="C:CENP-A containing chromatin"/>
    <property type="evidence" value="ECO:0000314"/>
    <property type="project" value="PomBase"/>
</dbReference>
<dbReference type="GO" id="GO:0043505">
    <property type="term" value="C:CENP-A containing nucleosome"/>
    <property type="evidence" value="ECO:0000303"/>
    <property type="project" value="PomBase"/>
</dbReference>
<dbReference type="GO" id="GO:0000785">
    <property type="term" value="C:chromatin"/>
    <property type="evidence" value="ECO:0000314"/>
    <property type="project" value="PomBase"/>
</dbReference>
<dbReference type="GO" id="GO:0034506">
    <property type="term" value="C:chromosome, centromeric core domain"/>
    <property type="evidence" value="ECO:0000314"/>
    <property type="project" value="PomBase"/>
</dbReference>
<dbReference type="GO" id="GO:0000775">
    <property type="term" value="C:chromosome, centromeric region"/>
    <property type="evidence" value="ECO:0000314"/>
    <property type="project" value="PomBase"/>
</dbReference>
<dbReference type="GO" id="GO:0000779">
    <property type="term" value="C:condensed chromosome, centromeric region"/>
    <property type="evidence" value="ECO:0000314"/>
    <property type="project" value="PomBase"/>
</dbReference>
<dbReference type="GO" id="GO:0005634">
    <property type="term" value="C:nucleus"/>
    <property type="evidence" value="ECO:0007005"/>
    <property type="project" value="PomBase"/>
</dbReference>
<dbReference type="GO" id="GO:0019237">
    <property type="term" value="F:centromeric DNA binding"/>
    <property type="evidence" value="ECO:0000255"/>
    <property type="project" value="PomBase"/>
</dbReference>
<dbReference type="GO" id="GO:0046982">
    <property type="term" value="F:protein heterodimerization activity"/>
    <property type="evidence" value="ECO:0007669"/>
    <property type="project" value="InterPro"/>
</dbReference>
<dbReference type="GO" id="GO:0030527">
    <property type="term" value="F:structural constituent of chromatin"/>
    <property type="evidence" value="ECO:0007669"/>
    <property type="project" value="InterPro"/>
</dbReference>
<dbReference type="GO" id="GO:0034080">
    <property type="term" value="P:CENP-A containing chromatin assembly"/>
    <property type="evidence" value="ECO:0000315"/>
    <property type="project" value="PomBase"/>
</dbReference>
<dbReference type="CDD" id="cd22911">
    <property type="entry name" value="HFD_H3"/>
    <property type="match status" value="1"/>
</dbReference>
<dbReference type="FunFam" id="1.10.20.10:FF:000157">
    <property type="entry name" value="Histone H3-like centromeric protein A"/>
    <property type="match status" value="1"/>
</dbReference>
<dbReference type="Gene3D" id="1.10.20.10">
    <property type="entry name" value="Histone, subunit A"/>
    <property type="match status" value="1"/>
</dbReference>
<dbReference type="InterPro" id="IPR009072">
    <property type="entry name" value="Histone-fold"/>
</dbReference>
<dbReference type="InterPro" id="IPR007125">
    <property type="entry name" value="Histone_H2A/H2B/H3"/>
</dbReference>
<dbReference type="InterPro" id="IPR000164">
    <property type="entry name" value="Histone_H3/CENP-A"/>
</dbReference>
<dbReference type="PANTHER" id="PTHR45810:SF1">
    <property type="entry name" value="HISTONE H3-LIKE CENTROMERIC PROTEIN A"/>
    <property type="match status" value="1"/>
</dbReference>
<dbReference type="PANTHER" id="PTHR45810">
    <property type="entry name" value="HISTONE H3.2"/>
    <property type="match status" value="1"/>
</dbReference>
<dbReference type="Pfam" id="PF00125">
    <property type="entry name" value="Histone"/>
    <property type="match status" value="1"/>
</dbReference>
<dbReference type="PRINTS" id="PR00622">
    <property type="entry name" value="HISTONEH3"/>
</dbReference>
<dbReference type="SMART" id="SM00428">
    <property type="entry name" value="H3"/>
    <property type="match status" value="1"/>
</dbReference>
<dbReference type="SUPFAM" id="SSF47113">
    <property type="entry name" value="Histone-fold"/>
    <property type="match status" value="1"/>
</dbReference>
<organism>
    <name type="scientific">Schizosaccharomyces pombe (strain 972 / ATCC 24843)</name>
    <name type="common">Fission yeast</name>
    <dbReference type="NCBI Taxonomy" id="284812"/>
    <lineage>
        <taxon>Eukaryota</taxon>
        <taxon>Fungi</taxon>
        <taxon>Dikarya</taxon>
        <taxon>Ascomycota</taxon>
        <taxon>Taphrinomycotina</taxon>
        <taxon>Schizosaccharomycetes</taxon>
        <taxon>Schizosaccharomycetales</taxon>
        <taxon>Schizosaccharomycetaceae</taxon>
        <taxon>Schizosaccharomyces</taxon>
    </lineage>
</organism>
<evidence type="ECO:0000250" key="1">
    <source>
        <dbReference type="UniProtKB" id="P36012"/>
    </source>
</evidence>
<evidence type="ECO:0000256" key="2">
    <source>
        <dbReference type="SAM" id="MobiDB-lite"/>
    </source>
</evidence>
<evidence type="ECO:0000269" key="3">
    <source>
    </source>
</evidence>
<evidence type="ECO:0000305" key="4"/>
<proteinExistence type="evidence at protein level"/>
<accession>Q9Y812</accession>
<comment type="function">
    <text evidence="3">Histone H3-like nucleosomal protein that is specifically found in centromeric nucleosomes. Replaces conventional H3 in the nucleosome core of centromeric chromatin that serves as an assembly site for the inner kinetochore. Required for recruitment and assembly of kinetochore proteins, mitotic progression and chromosome segregation. May serve as an epigenetic mark that propagates centromere identity through replication and cell division.</text>
</comment>
<comment type="subunit">
    <text evidence="3">Component of centromeric nucleosomes, where DNA is wrapped around a histone octamer core. The octamer contains two molecules each of H2A, H2B, cnp1/CENPA and H4 assembled in one cnp1-H4 heterotetramer and two H2A-H2B heterodimers. Interacts with the inner kinetochore (PubMed:10864871). Component of centromeric nucleosomes (PubMed:10864871). Interacts with mis6 (PubMed:10864871). Interacts with sim4 (PubMed:10864871).</text>
</comment>
<comment type="interaction">
    <interactant intactId="EBI-1153281">
        <id>Q9Y812</id>
    </interactant>
    <interactant intactId="EBI-1002822">
        <id>Q9Y738</id>
        <label>mis12</label>
    </interactant>
    <organismsDiffer>false</organismsDiffer>
    <experiments>3</experiments>
</comment>
<comment type="subcellular location">
    <subcellularLocation>
        <location evidence="3">Nucleus</location>
    </subcellularLocation>
    <subcellularLocation>
        <location evidence="3">Chromosome</location>
        <location evidence="3">Centromere</location>
    </subcellularLocation>
    <text evidence="3">Localizes to the nonrepetitive inner centromere.</text>
</comment>
<comment type="PTM">
    <text evidence="1">Ubiquitinated. Is degraded through ubiquitin-mediated proteolysis when not protected by its association to the kinetochore.</text>
</comment>
<comment type="similarity">
    <text evidence="4">Belongs to the histone H3 family.</text>
</comment>
<keyword id="KW-0137">Centromere</keyword>
<keyword id="KW-0158">Chromosome</keyword>
<keyword id="KW-0238">DNA-binding</keyword>
<keyword id="KW-0544">Nucleosome core</keyword>
<keyword id="KW-0539">Nucleus</keyword>
<keyword id="KW-1185">Reference proteome</keyword>
<keyword id="KW-0832">Ubl conjugation</keyword>
<sequence length="120" mass="13884">MAKKSLMAEPGDPIPRPRKKRYRPGTTALREIRKYQRSTDLLIQRLPFSRIVREISSEFVANFSTDVGLRWQSTALQCLQEAAEAFLVHLFEDTNLCAIHAKRVTIMQRDMQLARRIRGA</sequence>
<protein>
    <recommendedName>
        <fullName>Histone H3-like centromeric protein cnp1</fullName>
        <shortName>Centromere protein 1</shortName>
    </recommendedName>
    <alternativeName>
        <fullName>CENP-A homolog</fullName>
    </alternativeName>
    <alternativeName>
        <fullName evidence="4">CENPA homolog</fullName>
    </alternativeName>
    <alternativeName>
        <fullName>Silencing in the middle of the centromere protein 2</fullName>
    </alternativeName>
</protein>
<name>CENPA_SCHPO</name>